<proteinExistence type="inferred from homology"/>
<keyword id="KW-0028">Amino-acid biosynthesis</keyword>
<keyword id="KW-0368">Histidine biosynthesis</keyword>
<keyword id="KW-0378">Hydrolase</keyword>
<keyword id="KW-0486">Methionine biosynthesis</keyword>
<keyword id="KW-0511">Multifunctional enzyme</keyword>
<keyword id="KW-0521">NADP</keyword>
<keyword id="KW-0554">One-carbon metabolism</keyword>
<keyword id="KW-0560">Oxidoreductase</keyword>
<keyword id="KW-0658">Purine biosynthesis</keyword>
<keyword id="KW-1185">Reference proteome</keyword>
<protein>
    <recommendedName>
        <fullName evidence="1">Bifunctional protein FolD</fullName>
    </recommendedName>
    <domain>
        <recommendedName>
            <fullName evidence="1">Methylenetetrahydrofolate dehydrogenase</fullName>
            <ecNumber evidence="1">1.5.1.5</ecNumber>
        </recommendedName>
    </domain>
    <domain>
        <recommendedName>
            <fullName evidence="1">Methenyltetrahydrofolate cyclohydrolase</fullName>
            <ecNumber evidence="1">3.5.4.9</ecNumber>
        </recommendedName>
    </domain>
</protein>
<comment type="function">
    <text evidence="1">Catalyzes the oxidation of 5,10-methylenetetrahydrofolate to 5,10-methenyltetrahydrofolate and then the hydrolysis of 5,10-methenyltetrahydrofolate to 10-formyltetrahydrofolate.</text>
</comment>
<comment type="catalytic activity">
    <reaction evidence="1">
        <text>(6R)-5,10-methylene-5,6,7,8-tetrahydrofolate + NADP(+) = (6R)-5,10-methenyltetrahydrofolate + NADPH</text>
        <dbReference type="Rhea" id="RHEA:22812"/>
        <dbReference type="ChEBI" id="CHEBI:15636"/>
        <dbReference type="ChEBI" id="CHEBI:57455"/>
        <dbReference type="ChEBI" id="CHEBI:57783"/>
        <dbReference type="ChEBI" id="CHEBI:58349"/>
        <dbReference type="EC" id="1.5.1.5"/>
    </reaction>
</comment>
<comment type="catalytic activity">
    <reaction evidence="1">
        <text>(6R)-5,10-methenyltetrahydrofolate + H2O = (6R)-10-formyltetrahydrofolate + H(+)</text>
        <dbReference type="Rhea" id="RHEA:23700"/>
        <dbReference type="ChEBI" id="CHEBI:15377"/>
        <dbReference type="ChEBI" id="CHEBI:15378"/>
        <dbReference type="ChEBI" id="CHEBI:57455"/>
        <dbReference type="ChEBI" id="CHEBI:195366"/>
        <dbReference type="EC" id="3.5.4.9"/>
    </reaction>
</comment>
<comment type="pathway">
    <text evidence="1">One-carbon metabolism; tetrahydrofolate interconversion.</text>
</comment>
<comment type="subunit">
    <text evidence="1">Homodimer.</text>
</comment>
<comment type="similarity">
    <text evidence="1">Belongs to the tetrahydrofolate dehydrogenase/cyclohydrolase family.</text>
</comment>
<comment type="sequence caution" evidence="2">
    <conflict type="erroneous initiation">
        <sequence resource="EMBL-CDS" id="AAK99533"/>
    </conflict>
</comment>
<sequence length="285" mass="30680">MTQIIDGKALAAKLQGQLAEKTAKLKEETALVPGLVVILVGDNPASQVYVRNKERSALAAGSRSEVVRVPETITQEELLDLIAKYNQDPAWHGILVQLPLPKHIDEEAVLLAIDPEKDVDGFHPLNMGRLWSGHPVMIPSTPAGIMEMFHEYGIDLEGKNAVVIGRSNIVGKPMAQLLLAKNATVTLTHSRTHNLAKVAAKADILVVAIGRAKFVTADFVKPGAVVIDVGMNRDENGKLCGDVDYEAVAPLASHITPVPGGVGPMTITMLMEQTYQAALRTLDRK</sequence>
<name>FOLD_STRR6</name>
<accession>Q8DQD3</accession>
<reference key="1">
    <citation type="journal article" date="2001" name="J. Bacteriol.">
        <title>Genome of the bacterium Streptococcus pneumoniae strain R6.</title>
        <authorList>
            <person name="Hoskins J."/>
            <person name="Alborn W.E. Jr."/>
            <person name="Arnold J."/>
            <person name="Blaszczak L.C."/>
            <person name="Burgett S."/>
            <person name="DeHoff B.S."/>
            <person name="Estrem S.T."/>
            <person name="Fritz L."/>
            <person name="Fu D.-J."/>
            <person name="Fuller W."/>
            <person name="Geringer C."/>
            <person name="Gilmour R."/>
            <person name="Glass J.S."/>
            <person name="Khoja H."/>
            <person name="Kraft A.R."/>
            <person name="Lagace R.E."/>
            <person name="LeBlanc D.J."/>
            <person name="Lee L.N."/>
            <person name="Lefkowitz E.J."/>
            <person name="Lu J."/>
            <person name="Matsushima P."/>
            <person name="McAhren S.M."/>
            <person name="McHenney M."/>
            <person name="McLeaster K."/>
            <person name="Mundy C.W."/>
            <person name="Nicas T.I."/>
            <person name="Norris F.H."/>
            <person name="O'Gara M."/>
            <person name="Peery R.B."/>
            <person name="Robertson G.T."/>
            <person name="Rockey P."/>
            <person name="Sun P.-M."/>
            <person name="Winkler M.E."/>
            <person name="Yang Y."/>
            <person name="Young-Bellido M."/>
            <person name="Zhao G."/>
            <person name="Zook C.A."/>
            <person name="Baltz R.H."/>
            <person name="Jaskunas S.R."/>
            <person name="Rosteck P.R. Jr."/>
            <person name="Skatrud P.L."/>
            <person name="Glass J.I."/>
        </authorList>
    </citation>
    <scope>NUCLEOTIDE SEQUENCE [LARGE SCALE GENOMIC DNA]</scope>
    <source>
        <strain>ATCC BAA-255 / R6</strain>
    </source>
</reference>
<gene>
    <name evidence="1" type="primary">folD</name>
    <name type="ordered locus">spr0729</name>
</gene>
<feature type="chain" id="PRO_0000268513" description="Bifunctional protein FolD">
    <location>
        <begin position="1"/>
        <end position="285"/>
    </location>
</feature>
<feature type="binding site" evidence="1">
    <location>
        <begin position="165"/>
        <end position="167"/>
    </location>
    <ligand>
        <name>NADP(+)</name>
        <dbReference type="ChEBI" id="CHEBI:58349"/>
    </ligand>
</feature>
<feature type="binding site" evidence="1">
    <location>
        <position position="190"/>
    </location>
    <ligand>
        <name>NADP(+)</name>
        <dbReference type="ChEBI" id="CHEBI:58349"/>
    </ligand>
</feature>
<dbReference type="EC" id="1.5.1.5" evidence="1"/>
<dbReference type="EC" id="3.5.4.9" evidence="1"/>
<dbReference type="EMBL" id="AE007317">
    <property type="protein sequence ID" value="AAK99533.1"/>
    <property type="status" value="ALT_INIT"/>
    <property type="molecule type" value="Genomic_DNA"/>
</dbReference>
<dbReference type="PIR" id="A97963">
    <property type="entry name" value="A97963"/>
</dbReference>
<dbReference type="RefSeq" id="NP_358323.1">
    <property type="nucleotide sequence ID" value="NC_003098.1"/>
</dbReference>
<dbReference type="RefSeq" id="WP_000192079.1">
    <property type="nucleotide sequence ID" value="NC_003098.1"/>
</dbReference>
<dbReference type="SMR" id="Q8DQD3"/>
<dbReference type="STRING" id="171101.spr0729"/>
<dbReference type="KEGG" id="spr:spr0729"/>
<dbReference type="PATRIC" id="fig|171101.6.peg.807"/>
<dbReference type="eggNOG" id="COG0190">
    <property type="taxonomic scope" value="Bacteria"/>
</dbReference>
<dbReference type="HOGENOM" id="CLU_034045_2_1_9"/>
<dbReference type="UniPathway" id="UPA00193"/>
<dbReference type="Proteomes" id="UP000000586">
    <property type="component" value="Chromosome"/>
</dbReference>
<dbReference type="GO" id="GO:0005829">
    <property type="term" value="C:cytosol"/>
    <property type="evidence" value="ECO:0000318"/>
    <property type="project" value="GO_Central"/>
</dbReference>
<dbReference type="GO" id="GO:0004477">
    <property type="term" value="F:methenyltetrahydrofolate cyclohydrolase activity"/>
    <property type="evidence" value="ECO:0000318"/>
    <property type="project" value="GO_Central"/>
</dbReference>
<dbReference type="GO" id="GO:0004488">
    <property type="term" value="F:methylenetetrahydrofolate dehydrogenase (NADP+) activity"/>
    <property type="evidence" value="ECO:0000318"/>
    <property type="project" value="GO_Central"/>
</dbReference>
<dbReference type="GO" id="GO:0000105">
    <property type="term" value="P:L-histidine biosynthetic process"/>
    <property type="evidence" value="ECO:0007669"/>
    <property type="project" value="UniProtKB-KW"/>
</dbReference>
<dbReference type="GO" id="GO:0009086">
    <property type="term" value="P:methionine biosynthetic process"/>
    <property type="evidence" value="ECO:0007669"/>
    <property type="project" value="UniProtKB-KW"/>
</dbReference>
<dbReference type="GO" id="GO:0006164">
    <property type="term" value="P:purine nucleotide biosynthetic process"/>
    <property type="evidence" value="ECO:0007669"/>
    <property type="project" value="UniProtKB-KW"/>
</dbReference>
<dbReference type="GO" id="GO:0035999">
    <property type="term" value="P:tetrahydrofolate interconversion"/>
    <property type="evidence" value="ECO:0000318"/>
    <property type="project" value="GO_Central"/>
</dbReference>
<dbReference type="CDD" id="cd01080">
    <property type="entry name" value="NAD_bind_m-THF_DH_Cyclohyd"/>
    <property type="match status" value="1"/>
</dbReference>
<dbReference type="FunFam" id="3.40.50.720:FF:000094">
    <property type="entry name" value="Bifunctional protein FolD"/>
    <property type="match status" value="1"/>
</dbReference>
<dbReference type="FunFam" id="3.40.50.10860:FF:000005">
    <property type="entry name" value="C-1-tetrahydrofolate synthase, cytoplasmic, putative"/>
    <property type="match status" value="1"/>
</dbReference>
<dbReference type="Gene3D" id="3.40.50.10860">
    <property type="entry name" value="Leucine Dehydrogenase, chain A, domain 1"/>
    <property type="match status" value="1"/>
</dbReference>
<dbReference type="Gene3D" id="3.40.50.720">
    <property type="entry name" value="NAD(P)-binding Rossmann-like Domain"/>
    <property type="match status" value="1"/>
</dbReference>
<dbReference type="HAMAP" id="MF_01576">
    <property type="entry name" value="THF_DHG_CYH"/>
    <property type="match status" value="1"/>
</dbReference>
<dbReference type="InterPro" id="IPR046346">
    <property type="entry name" value="Aminoacid_DH-like_N_sf"/>
</dbReference>
<dbReference type="InterPro" id="IPR036291">
    <property type="entry name" value="NAD(P)-bd_dom_sf"/>
</dbReference>
<dbReference type="InterPro" id="IPR000672">
    <property type="entry name" value="THF_DH/CycHdrlase"/>
</dbReference>
<dbReference type="InterPro" id="IPR020630">
    <property type="entry name" value="THF_DH/CycHdrlase_cat_dom"/>
</dbReference>
<dbReference type="InterPro" id="IPR020867">
    <property type="entry name" value="THF_DH/CycHdrlase_CS"/>
</dbReference>
<dbReference type="InterPro" id="IPR020631">
    <property type="entry name" value="THF_DH/CycHdrlase_NAD-bd_dom"/>
</dbReference>
<dbReference type="NCBIfam" id="NF008058">
    <property type="entry name" value="PRK10792.1"/>
    <property type="match status" value="1"/>
</dbReference>
<dbReference type="NCBIfam" id="NF010776">
    <property type="entry name" value="PRK14179.1"/>
    <property type="match status" value="1"/>
</dbReference>
<dbReference type="NCBIfam" id="NF010783">
    <property type="entry name" value="PRK14186.1"/>
    <property type="match status" value="1"/>
</dbReference>
<dbReference type="PANTHER" id="PTHR48099:SF5">
    <property type="entry name" value="C-1-TETRAHYDROFOLATE SYNTHASE, CYTOPLASMIC"/>
    <property type="match status" value="1"/>
</dbReference>
<dbReference type="PANTHER" id="PTHR48099">
    <property type="entry name" value="C-1-TETRAHYDROFOLATE SYNTHASE, CYTOPLASMIC-RELATED"/>
    <property type="match status" value="1"/>
</dbReference>
<dbReference type="Pfam" id="PF00763">
    <property type="entry name" value="THF_DHG_CYH"/>
    <property type="match status" value="1"/>
</dbReference>
<dbReference type="Pfam" id="PF02882">
    <property type="entry name" value="THF_DHG_CYH_C"/>
    <property type="match status" value="1"/>
</dbReference>
<dbReference type="PRINTS" id="PR00085">
    <property type="entry name" value="THFDHDRGNASE"/>
</dbReference>
<dbReference type="SUPFAM" id="SSF53223">
    <property type="entry name" value="Aminoacid dehydrogenase-like, N-terminal domain"/>
    <property type="match status" value="1"/>
</dbReference>
<dbReference type="SUPFAM" id="SSF51735">
    <property type="entry name" value="NAD(P)-binding Rossmann-fold domains"/>
    <property type="match status" value="1"/>
</dbReference>
<dbReference type="PROSITE" id="PS00766">
    <property type="entry name" value="THF_DHG_CYH_1"/>
    <property type="match status" value="1"/>
</dbReference>
<dbReference type="PROSITE" id="PS00767">
    <property type="entry name" value="THF_DHG_CYH_2"/>
    <property type="match status" value="1"/>
</dbReference>
<evidence type="ECO:0000255" key="1">
    <source>
        <dbReference type="HAMAP-Rule" id="MF_01576"/>
    </source>
</evidence>
<evidence type="ECO:0000305" key="2"/>
<organism>
    <name type="scientific">Streptococcus pneumoniae (strain ATCC BAA-255 / R6)</name>
    <dbReference type="NCBI Taxonomy" id="171101"/>
    <lineage>
        <taxon>Bacteria</taxon>
        <taxon>Bacillati</taxon>
        <taxon>Bacillota</taxon>
        <taxon>Bacilli</taxon>
        <taxon>Lactobacillales</taxon>
        <taxon>Streptococcaceae</taxon>
        <taxon>Streptococcus</taxon>
    </lineage>
</organism>